<keyword id="KW-0413">Isomerase</keyword>
<keyword id="KW-1185">Reference proteome</keyword>
<keyword id="KW-0819">tRNA processing</keyword>
<sequence>MIDQGRISVLSEEGDYLLVDKPLDWTSFDVVAKIRGAYKRNGAKRKVGHCGTLDPKATGLLILATGRKTKTISSLELLDKAYEGTIRLGAKTVSHDTESEEYDLRDVPSLDERAIREAATSMIGERMQQPPMHSAVWHNGKRLYELARQGHEVKERKARQIEIHQFEITGIELPYVHFYIRVSKGAYIRVIAHELGELLGVGGYLKSLKRVAIGQYQLSDAMSVDAVVDEITRAASVIEE</sequence>
<proteinExistence type="inferred from homology"/>
<organism>
    <name type="scientific">Chlorobaculum tepidum (strain ATCC 49652 / DSM 12025 / NBRC 103806 / TLS)</name>
    <name type="common">Chlorobium tepidum</name>
    <dbReference type="NCBI Taxonomy" id="194439"/>
    <lineage>
        <taxon>Bacteria</taxon>
        <taxon>Pseudomonadati</taxon>
        <taxon>Chlorobiota</taxon>
        <taxon>Chlorobiia</taxon>
        <taxon>Chlorobiales</taxon>
        <taxon>Chlorobiaceae</taxon>
        <taxon>Chlorobaculum</taxon>
    </lineage>
</organism>
<protein>
    <recommendedName>
        <fullName evidence="1">tRNA pseudouridine synthase B</fullName>
        <ecNumber evidence="1">5.4.99.25</ecNumber>
    </recommendedName>
    <alternativeName>
        <fullName evidence="1">tRNA pseudouridine(55) synthase</fullName>
        <shortName evidence="1">Psi55 synthase</shortName>
    </alternativeName>
    <alternativeName>
        <fullName evidence="1">tRNA pseudouridylate synthase</fullName>
    </alternativeName>
    <alternativeName>
        <fullName evidence="1">tRNA-uridine isomerase</fullName>
    </alternativeName>
</protein>
<accession>Q8KFS9</accession>
<gene>
    <name evidence="1" type="primary">truB</name>
    <name type="ordered locus">CT0243</name>
</gene>
<dbReference type="EC" id="5.4.99.25" evidence="1"/>
<dbReference type="EMBL" id="AE006470">
    <property type="protein sequence ID" value="AAM71489.1"/>
    <property type="molecule type" value="Genomic_DNA"/>
</dbReference>
<dbReference type="RefSeq" id="NP_661147.1">
    <property type="nucleotide sequence ID" value="NC_002932.3"/>
</dbReference>
<dbReference type="RefSeq" id="WP_010931935.1">
    <property type="nucleotide sequence ID" value="NC_002932.3"/>
</dbReference>
<dbReference type="SMR" id="Q8KFS9"/>
<dbReference type="STRING" id="194439.CT0243"/>
<dbReference type="EnsemblBacteria" id="AAM71489">
    <property type="protein sequence ID" value="AAM71489"/>
    <property type="gene ID" value="CT0243"/>
</dbReference>
<dbReference type="KEGG" id="cte:CT0243"/>
<dbReference type="PATRIC" id="fig|194439.7.peg.235"/>
<dbReference type="eggNOG" id="COG0130">
    <property type="taxonomic scope" value="Bacteria"/>
</dbReference>
<dbReference type="HOGENOM" id="CLU_032087_2_0_10"/>
<dbReference type="OrthoDB" id="9802309at2"/>
<dbReference type="Proteomes" id="UP000001007">
    <property type="component" value="Chromosome"/>
</dbReference>
<dbReference type="GO" id="GO:0003723">
    <property type="term" value="F:RNA binding"/>
    <property type="evidence" value="ECO:0007669"/>
    <property type="project" value="InterPro"/>
</dbReference>
<dbReference type="GO" id="GO:0160148">
    <property type="term" value="F:tRNA pseudouridine(55) synthase activity"/>
    <property type="evidence" value="ECO:0007669"/>
    <property type="project" value="UniProtKB-EC"/>
</dbReference>
<dbReference type="GO" id="GO:1990481">
    <property type="term" value="P:mRNA pseudouridine synthesis"/>
    <property type="evidence" value="ECO:0007669"/>
    <property type="project" value="TreeGrafter"/>
</dbReference>
<dbReference type="GO" id="GO:0031119">
    <property type="term" value="P:tRNA pseudouridine synthesis"/>
    <property type="evidence" value="ECO:0007669"/>
    <property type="project" value="UniProtKB-UniRule"/>
</dbReference>
<dbReference type="CDD" id="cd02573">
    <property type="entry name" value="PseudoU_synth_EcTruB"/>
    <property type="match status" value="1"/>
</dbReference>
<dbReference type="Gene3D" id="3.30.2350.10">
    <property type="entry name" value="Pseudouridine synthase"/>
    <property type="match status" value="1"/>
</dbReference>
<dbReference type="HAMAP" id="MF_01080">
    <property type="entry name" value="TruB_bact"/>
    <property type="match status" value="1"/>
</dbReference>
<dbReference type="InterPro" id="IPR020103">
    <property type="entry name" value="PsdUridine_synth_cat_dom_sf"/>
</dbReference>
<dbReference type="InterPro" id="IPR002501">
    <property type="entry name" value="PsdUridine_synth_N"/>
</dbReference>
<dbReference type="InterPro" id="IPR014780">
    <property type="entry name" value="tRNA_psdUridine_synth_TruB"/>
</dbReference>
<dbReference type="InterPro" id="IPR032819">
    <property type="entry name" value="TruB_C"/>
</dbReference>
<dbReference type="NCBIfam" id="TIGR00431">
    <property type="entry name" value="TruB"/>
    <property type="match status" value="1"/>
</dbReference>
<dbReference type="PANTHER" id="PTHR13767:SF2">
    <property type="entry name" value="PSEUDOURIDYLATE SYNTHASE TRUB1"/>
    <property type="match status" value="1"/>
</dbReference>
<dbReference type="PANTHER" id="PTHR13767">
    <property type="entry name" value="TRNA-PSEUDOURIDINE SYNTHASE"/>
    <property type="match status" value="1"/>
</dbReference>
<dbReference type="Pfam" id="PF16198">
    <property type="entry name" value="TruB_C_2"/>
    <property type="match status" value="1"/>
</dbReference>
<dbReference type="Pfam" id="PF01509">
    <property type="entry name" value="TruB_N"/>
    <property type="match status" value="1"/>
</dbReference>
<dbReference type="SUPFAM" id="SSF55120">
    <property type="entry name" value="Pseudouridine synthase"/>
    <property type="match status" value="1"/>
</dbReference>
<comment type="function">
    <text evidence="1">Responsible for synthesis of pseudouridine from uracil-55 in the psi GC loop of transfer RNAs.</text>
</comment>
<comment type="catalytic activity">
    <reaction evidence="1">
        <text>uridine(55) in tRNA = pseudouridine(55) in tRNA</text>
        <dbReference type="Rhea" id="RHEA:42532"/>
        <dbReference type="Rhea" id="RHEA-COMP:10101"/>
        <dbReference type="Rhea" id="RHEA-COMP:10102"/>
        <dbReference type="ChEBI" id="CHEBI:65314"/>
        <dbReference type="ChEBI" id="CHEBI:65315"/>
        <dbReference type="EC" id="5.4.99.25"/>
    </reaction>
</comment>
<comment type="similarity">
    <text evidence="1">Belongs to the pseudouridine synthase TruB family. Type 1 subfamily.</text>
</comment>
<reference key="1">
    <citation type="journal article" date="2002" name="Proc. Natl. Acad. Sci. U.S.A.">
        <title>The complete genome sequence of Chlorobium tepidum TLS, a photosynthetic, anaerobic, green-sulfur bacterium.</title>
        <authorList>
            <person name="Eisen J.A."/>
            <person name="Nelson K.E."/>
            <person name="Paulsen I.T."/>
            <person name="Heidelberg J.F."/>
            <person name="Wu M."/>
            <person name="Dodson R.J."/>
            <person name="DeBoy R.T."/>
            <person name="Gwinn M.L."/>
            <person name="Nelson W.C."/>
            <person name="Haft D.H."/>
            <person name="Hickey E.K."/>
            <person name="Peterson J.D."/>
            <person name="Durkin A.S."/>
            <person name="Kolonay J.F."/>
            <person name="Yang F."/>
            <person name="Holt I.E."/>
            <person name="Umayam L.A."/>
            <person name="Mason T.M."/>
            <person name="Brenner M."/>
            <person name="Shea T.P."/>
            <person name="Parksey D.S."/>
            <person name="Nierman W.C."/>
            <person name="Feldblyum T.V."/>
            <person name="Hansen C.L."/>
            <person name="Craven M.B."/>
            <person name="Radune D."/>
            <person name="Vamathevan J.J."/>
            <person name="Khouri H.M."/>
            <person name="White O."/>
            <person name="Gruber T.M."/>
            <person name="Ketchum K.A."/>
            <person name="Venter J.C."/>
            <person name="Tettelin H."/>
            <person name="Bryant D.A."/>
            <person name="Fraser C.M."/>
        </authorList>
    </citation>
    <scope>NUCLEOTIDE SEQUENCE [LARGE SCALE GENOMIC DNA]</scope>
    <source>
        <strain>ATCC 49652 / DSM 12025 / NBRC 103806 / TLS</strain>
    </source>
</reference>
<feature type="chain" id="PRO_0000121817" description="tRNA pseudouridine synthase B">
    <location>
        <begin position="1"/>
        <end position="240"/>
    </location>
</feature>
<feature type="active site" description="Nucleophile" evidence="1">
    <location>
        <position position="54"/>
    </location>
</feature>
<name>TRUB_CHLTE</name>
<evidence type="ECO:0000255" key="1">
    <source>
        <dbReference type="HAMAP-Rule" id="MF_01080"/>
    </source>
</evidence>